<protein>
    <recommendedName>
        <fullName>Muscarinic acetylcholine receptor M1</fullName>
    </recommendedName>
</protein>
<gene>
    <name type="primary">CHRM1</name>
</gene>
<sequence length="460" mass="51419">MNTSAPPAVSPNITVLAPGKGPWQVAFIGITTGLLSLATVTGNLLVLISFKVNTELKTVNNYFLLSLACADLIIGTFSMNLYTTYLLMGHWALGTLACDLWLALDYVASNASVMNLLLISFDRYFSVTRPLSYRAKRTPRRAALMIGLAWLVSFVLWAPAILFWQYLVGERTVLAGQCYIQFLSQPIITFGTAMAAFYLPVTVMCTLYWRIYRETENRARELAALQGSETPGKGGGSSSSSERSQPGAEGSPETPPGRCCRCCRAPRLLQAYSWKEEEEEDEGSMESLTSSEGEEPGSEVVIKMPMVDPEAQAPAKQPPRSSPNTVKRPTRKGRERAGKGQKPRGKEQLAKRKTFSLVKEKKAARTLSAILLAFIVTWTPYNIMVLVSTFCKDCVPETLWELGYWLCYVNSTINPMCYALCNKAFRDTFRLLLLCRWDKRRWRKIPKRPGSVHRTPSRQC</sequence>
<proteinExistence type="evidence at transcript level"/>
<name>ACM1_PIG</name>
<reference key="1">
    <citation type="journal article" date="1986" name="Nature">
        <title>Cloning, sequencing and expression of complementary DNA encoding the muscarinic acetylcholine receptor.</title>
        <authorList>
            <person name="Kubo T."/>
            <person name="Fukuda K."/>
            <person name="Mikami A."/>
            <person name="Maeda A."/>
            <person name="Takahashi H."/>
            <person name="Mishina M."/>
            <person name="Haga T."/>
            <person name="Haga K."/>
            <person name="Ichiyama A."/>
            <person name="Kangawa K."/>
            <person name="Kojima M."/>
            <person name="Matsuo H."/>
            <person name="Hirose T."/>
            <person name="Numa S."/>
        </authorList>
    </citation>
    <scope>NUCLEOTIDE SEQUENCE [MRNA]</scope>
    <source>
        <tissue>Brain</tissue>
    </source>
</reference>
<organism>
    <name type="scientific">Sus scrofa</name>
    <name type="common">Pig</name>
    <dbReference type="NCBI Taxonomy" id="9823"/>
    <lineage>
        <taxon>Eukaryota</taxon>
        <taxon>Metazoa</taxon>
        <taxon>Chordata</taxon>
        <taxon>Craniata</taxon>
        <taxon>Vertebrata</taxon>
        <taxon>Euteleostomi</taxon>
        <taxon>Mammalia</taxon>
        <taxon>Eutheria</taxon>
        <taxon>Laurasiatheria</taxon>
        <taxon>Artiodactyla</taxon>
        <taxon>Suina</taxon>
        <taxon>Suidae</taxon>
        <taxon>Sus</taxon>
    </lineage>
</organism>
<keyword id="KW-1003">Cell membrane</keyword>
<keyword id="KW-1015">Disulfide bond</keyword>
<keyword id="KW-0297">G-protein coupled receptor</keyword>
<keyword id="KW-0325">Glycoprotein</keyword>
<keyword id="KW-0472">Membrane</keyword>
<keyword id="KW-0597">Phosphoprotein</keyword>
<keyword id="KW-0628">Postsynaptic cell membrane</keyword>
<keyword id="KW-0675">Receptor</keyword>
<keyword id="KW-1185">Reference proteome</keyword>
<keyword id="KW-0770">Synapse</keyword>
<keyword id="KW-0807">Transducer</keyword>
<keyword id="KW-0812">Transmembrane</keyword>
<keyword id="KW-1133">Transmembrane helix</keyword>
<accession>P04761</accession>
<dbReference type="EMBL" id="X04413">
    <property type="protein sequence ID" value="CAA28003.1"/>
    <property type="molecule type" value="mRNA"/>
</dbReference>
<dbReference type="PIR" id="A24325">
    <property type="entry name" value="A24325"/>
</dbReference>
<dbReference type="RefSeq" id="NP_999199.1">
    <property type="nucleotide sequence ID" value="NM_214034.1"/>
</dbReference>
<dbReference type="RefSeq" id="XP_013849645.1">
    <property type="nucleotide sequence ID" value="XM_013994191.1"/>
</dbReference>
<dbReference type="SMR" id="P04761"/>
<dbReference type="FunCoup" id="P04761">
    <property type="interactions" value="243"/>
</dbReference>
<dbReference type="GlyCosmos" id="P04761">
    <property type="glycosylation" value="2 sites, No reported glycans"/>
</dbReference>
<dbReference type="GlyGen" id="P04761">
    <property type="glycosylation" value="2 sites"/>
</dbReference>
<dbReference type="PaxDb" id="9823-ENSSSCP00000026844"/>
<dbReference type="Ensembl" id="ENSSSCT00015092787.1">
    <property type="protein sequence ID" value="ENSSSCP00015037944.1"/>
    <property type="gene ID" value="ENSSSCG00015069309.1"/>
</dbReference>
<dbReference type="Ensembl" id="ENSSSCT00025101968.1">
    <property type="protein sequence ID" value="ENSSSCP00025045084.1"/>
    <property type="gene ID" value="ENSSSCG00025074060.1"/>
</dbReference>
<dbReference type="Ensembl" id="ENSSSCT00025102004.1">
    <property type="protein sequence ID" value="ENSSSCP00025045104.1"/>
    <property type="gene ID" value="ENSSSCG00025074060.1"/>
</dbReference>
<dbReference type="Ensembl" id="ENSSSCT00030016391.1">
    <property type="protein sequence ID" value="ENSSSCP00030007346.1"/>
    <property type="gene ID" value="ENSSSCG00030011943.1"/>
</dbReference>
<dbReference type="Ensembl" id="ENSSSCT00030016402.1">
    <property type="protein sequence ID" value="ENSSSCP00030007353.1"/>
    <property type="gene ID" value="ENSSSCG00030011943.1"/>
</dbReference>
<dbReference type="Ensembl" id="ENSSSCT00035060405.1">
    <property type="protein sequence ID" value="ENSSSCP00035024300.1"/>
    <property type="gene ID" value="ENSSSCG00035045451.1"/>
</dbReference>
<dbReference type="Ensembl" id="ENSSSCT00035060408.1">
    <property type="protein sequence ID" value="ENSSSCP00035024301.1"/>
    <property type="gene ID" value="ENSSSCG00035045451.1"/>
</dbReference>
<dbReference type="Ensembl" id="ENSSSCT00040060497.1">
    <property type="protein sequence ID" value="ENSSSCP00040025407.1"/>
    <property type="gene ID" value="ENSSSCG00040045082.1"/>
</dbReference>
<dbReference type="Ensembl" id="ENSSSCT00040060566.1">
    <property type="protein sequence ID" value="ENSSSCP00040025434.1"/>
    <property type="gene ID" value="ENSSSCG00040045082.1"/>
</dbReference>
<dbReference type="Ensembl" id="ENSSSCT00045057639.1">
    <property type="protein sequence ID" value="ENSSSCP00045040313.1"/>
    <property type="gene ID" value="ENSSSCG00045033695.1"/>
</dbReference>
<dbReference type="Ensembl" id="ENSSSCT00045057669.1">
    <property type="protein sequence ID" value="ENSSSCP00045040337.1"/>
    <property type="gene ID" value="ENSSSCG00045033695.1"/>
</dbReference>
<dbReference type="Ensembl" id="ENSSSCT00050014122.1">
    <property type="protein sequence ID" value="ENSSSCP00050005817.1"/>
    <property type="gene ID" value="ENSSSCG00050010499.1"/>
</dbReference>
<dbReference type="Ensembl" id="ENSSSCT00050014128.1">
    <property type="protein sequence ID" value="ENSSSCP00050005819.1"/>
    <property type="gene ID" value="ENSSSCG00050010499.1"/>
</dbReference>
<dbReference type="Ensembl" id="ENSSSCT00055008469.1">
    <property type="protein sequence ID" value="ENSSSCP00055006696.1"/>
    <property type="gene ID" value="ENSSSCG00055004285.1"/>
</dbReference>
<dbReference type="Ensembl" id="ENSSSCT00055008473.1">
    <property type="protein sequence ID" value="ENSSSCP00055006699.1"/>
    <property type="gene ID" value="ENSSSCG00055004285.1"/>
</dbReference>
<dbReference type="Ensembl" id="ENSSSCT00060049104.1">
    <property type="protein sequence ID" value="ENSSSCP00060021028.1"/>
    <property type="gene ID" value="ENSSSCG00060036236.1"/>
</dbReference>
<dbReference type="Ensembl" id="ENSSSCT00060049109.1">
    <property type="protein sequence ID" value="ENSSSCP00060021030.1"/>
    <property type="gene ID" value="ENSSSCG00060036236.1"/>
</dbReference>
<dbReference type="Ensembl" id="ENSSSCT00065009381.1">
    <property type="protein sequence ID" value="ENSSSCP00065003912.1"/>
    <property type="gene ID" value="ENSSSCG00065007001.1"/>
</dbReference>
<dbReference type="Ensembl" id="ENSSSCT00065009386.1">
    <property type="protein sequence ID" value="ENSSSCP00065003914.1"/>
    <property type="gene ID" value="ENSSSCG00065007001.1"/>
</dbReference>
<dbReference type="Ensembl" id="ENSSSCT00105079582">
    <property type="protein sequence ID" value="ENSSSCP00105056344"/>
    <property type="gene ID" value="ENSSSCG00105041866"/>
</dbReference>
<dbReference type="Ensembl" id="ENSSSCT00110062722">
    <property type="protein sequence ID" value="ENSSSCP00110043967"/>
    <property type="gene ID" value="ENSSSCG00110032852"/>
</dbReference>
<dbReference type="Ensembl" id="ENSSSCT00115028459">
    <property type="protein sequence ID" value="ENSSSCP00115026992"/>
    <property type="gene ID" value="ENSSSCG00115016265"/>
</dbReference>
<dbReference type="Ensembl" id="ENSSSCT00130064237">
    <property type="protein sequence ID" value="ENSSSCP00130046055"/>
    <property type="gene ID" value="ENSSSCG00130032878"/>
</dbReference>
<dbReference type="GeneID" id="397099"/>
<dbReference type="KEGG" id="ssc:397099"/>
<dbReference type="CTD" id="1128"/>
<dbReference type="eggNOG" id="KOG4220">
    <property type="taxonomic scope" value="Eukaryota"/>
</dbReference>
<dbReference type="HOGENOM" id="CLU_009579_11_2_1"/>
<dbReference type="InParanoid" id="P04761"/>
<dbReference type="OrthoDB" id="10071887at2759"/>
<dbReference type="TreeFam" id="TF320495"/>
<dbReference type="Reactome" id="R-SSC-390648">
    <property type="pathway name" value="Muscarinic acetylcholine receptors"/>
</dbReference>
<dbReference type="Reactome" id="R-SSC-416476">
    <property type="pathway name" value="G alpha (q) signalling events"/>
</dbReference>
<dbReference type="Proteomes" id="UP000008227">
    <property type="component" value="Unplaced"/>
</dbReference>
<dbReference type="Proteomes" id="UP000314985">
    <property type="component" value="Unplaced"/>
</dbReference>
<dbReference type="Proteomes" id="UP000694570">
    <property type="component" value="Unplaced"/>
</dbReference>
<dbReference type="Proteomes" id="UP000694571">
    <property type="component" value="Unplaced"/>
</dbReference>
<dbReference type="Proteomes" id="UP000694720">
    <property type="component" value="Unplaced"/>
</dbReference>
<dbReference type="Proteomes" id="UP000694722">
    <property type="component" value="Unplaced"/>
</dbReference>
<dbReference type="Proteomes" id="UP000694723">
    <property type="component" value="Unplaced"/>
</dbReference>
<dbReference type="Proteomes" id="UP000694724">
    <property type="component" value="Unplaced"/>
</dbReference>
<dbReference type="Proteomes" id="UP000694725">
    <property type="component" value="Unplaced"/>
</dbReference>
<dbReference type="Proteomes" id="UP000694726">
    <property type="component" value="Unplaced"/>
</dbReference>
<dbReference type="Proteomes" id="UP000694727">
    <property type="component" value="Unplaced"/>
</dbReference>
<dbReference type="Proteomes" id="UP000694728">
    <property type="component" value="Unplaced"/>
</dbReference>
<dbReference type="GO" id="GO:0030425">
    <property type="term" value="C:dendrite"/>
    <property type="evidence" value="ECO:0000318"/>
    <property type="project" value="GO_Central"/>
</dbReference>
<dbReference type="GO" id="GO:0005886">
    <property type="term" value="C:plasma membrane"/>
    <property type="evidence" value="ECO:0000318"/>
    <property type="project" value="GO_Central"/>
</dbReference>
<dbReference type="GO" id="GO:0045211">
    <property type="term" value="C:postsynaptic membrane"/>
    <property type="evidence" value="ECO:0007669"/>
    <property type="project" value="UniProtKB-SubCell"/>
</dbReference>
<dbReference type="GO" id="GO:0045202">
    <property type="term" value="C:synapse"/>
    <property type="evidence" value="ECO:0000318"/>
    <property type="project" value="GO_Central"/>
</dbReference>
<dbReference type="GO" id="GO:0016907">
    <property type="term" value="F:G protein-coupled acetylcholine receptor activity"/>
    <property type="evidence" value="ECO:0000318"/>
    <property type="project" value="GO_Central"/>
</dbReference>
<dbReference type="GO" id="GO:0007197">
    <property type="term" value="P:adenylate cyclase-inhibiting G protein-coupled acetylcholine receptor signaling pathway"/>
    <property type="evidence" value="ECO:0000318"/>
    <property type="project" value="GO_Central"/>
</dbReference>
<dbReference type="GO" id="GO:0007268">
    <property type="term" value="P:chemical synaptic transmission"/>
    <property type="evidence" value="ECO:0000318"/>
    <property type="project" value="GO_Central"/>
</dbReference>
<dbReference type="GO" id="GO:0050890">
    <property type="term" value="P:cognition"/>
    <property type="evidence" value="ECO:0007669"/>
    <property type="project" value="InterPro"/>
</dbReference>
<dbReference type="GO" id="GO:0009649">
    <property type="term" value="P:entrainment of circadian clock"/>
    <property type="evidence" value="ECO:0000315"/>
    <property type="project" value="AgBase"/>
</dbReference>
<dbReference type="GO" id="GO:0007213">
    <property type="term" value="P:G protein-coupled acetylcholine receptor signaling pathway"/>
    <property type="evidence" value="ECO:0000315"/>
    <property type="project" value="AgBase"/>
</dbReference>
<dbReference type="GO" id="GO:0007187">
    <property type="term" value="P:G protein-coupled receptor signaling pathway, coupled to cyclic nucleotide second messenger"/>
    <property type="evidence" value="ECO:0000318"/>
    <property type="project" value="GO_Central"/>
</dbReference>
<dbReference type="GO" id="GO:0007603">
    <property type="term" value="P:phototransduction, visible light"/>
    <property type="evidence" value="ECO:0000315"/>
    <property type="project" value="AgBase"/>
</dbReference>
<dbReference type="GO" id="GO:0040012">
    <property type="term" value="P:regulation of locomotion"/>
    <property type="evidence" value="ECO:0007669"/>
    <property type="project" value="InterPro"/>
</dbReference>
<dbReference type="GO" id="GO:0046541">
    <property type="term" value="P:saliva secretion"/>
    <property type="evidence" value="ECO:0007669"/>
    <property type="project" value="InterPro"/>
</dbReference>
<dbReference type="CDD" id="cd17790">
    <property type="entry name" value="7tmA_mAChR_M1"/>
    <property type="match status" value="1"/>
</dbReference>
<dbReference type="FunFam" id="1.20.1070.10:FF:000103">
    <property type="entry name" value="Muscarinic acetylcholine receptor"/>
    <property type="match status" value="1"/>
</dbReference>
<dbReference type="FunFam" id="1.20.1070.10:FF:000162">
    <property type="entry name" value="Muscarinic acetylcholine receptor"/>
    <property type="match status" value="1"/>
</dbReference>
<dbReference type="Gene3D" id="1.20.1070.10">
    <property type="entry name" value="Rhodopsin 7-helix transmembrane proteins"/>
    <property type="match status" value="1"/>
</dbReference>
<dbReference type="InterPro" id="IPR000276">
    <property type="entry name" value="GPCR_Rhodpsn"/>
</dbReference>
<dbReference type="InterPro" id="IPR017452">
    <property type="entry name" value="GPCR_Rhodpsn_7TM"/>
</dbReference>
<dbReference type="InterPro" id="IPR002228">
    <property type="entry name" value="Musac_Ach_M1_rcpt"/>
</dbReference>
<dbReference type="InterPro" id="IPR000995">
    <property type="entry name" value="Musac_Ach_rcpt"/>
</dbReference>
<dbReference type="PANTHER" id="PTHR24247">
    <property type="entry name" value="5-HYDROXYTRYPTAMINE RECEPTOR"/>
    <property type="match status" value="1"/>
</dbReference>
<dbReference type="PANTHER" id="PTHR24247:SF182">
    <property type="entry name" value="MUSCARINIC ACETYLCHOLINE RECEPTOR M1"/>
    <property type="match status" value="1"/>
</dbReference>
<dbReference type="Pfam" id="PF00001">
    <property type="entry name" value="7tm_1"/>
    <property type="match status" value="1"/>
</dbReference>
<dbReference type="PRINTS" id="PR00237">
    <property type="entry name" value="GPCRRHODOPSN"/>
</dbReference>
<dbReference type="PRINTS" id="PR00243">
    <property type="entry name" value="MUSCARINICR"/>
</dbReference>
<dbReference type="PRINTS" id="PR00538">
    <property type="entry name" value="MUSCRINICM1R"/>
</dbReference>
<dbReference type="SUPFAM" id="SSF81321">
    <property type="entry name" value="Family A G protein-coupled receptor-like"/>
    <property type="match status" value="1"/>
</dbReference>
<dbReference type="PROSITE" id="PS00237">
    <property type="entry name" value="G_PROTEIN_RECEP_F1_1"/>
    <property type="match status" value="1"/>
</dbReference>
<dbReference type="PROSITE" id="PS50262">
    <property type="entry name" value="G_PROTEIN_RECEP_F1_2"/>
    <property type="match status" value="1"/>
</dbReference>
<evidence type="ECO:0000250" key="1">
    <source>
        <dbReference type="UniProtKB" id="P11229"/>
    </source>
</evidence>
<evidence type="ECO:0000250" key="2">
    <source>
        <dbReference type="UniProtKB" id="P12657"/>
    </source>
</evidence>
<evidence type="ECO:0000255" key="3"/>
<evidence type="ECO:0000255" key="4">
    <source>
        <dbReference type="PROSITE-ProRule" id="PRU00498"/>
    </source>
</evidence>
<evidence type="ECO:0000255" key="5">
    <source>
        <dbReference type="PROSITE-ProRule" id="PRU00521"/>
    </source>
</evidence>
<evidence type="ECO:0000256" key="6">
    <source>
        <dbReference type="SAM" id="MobiDB-lite"/>
    </source>
</evidence>
<comment type="function">
    <text>The muscarinic acetylcholine receptor mediates various cellular responses, including inhibition of adenylate cyclase, breakdown of phosphoinositides and modulation of potassium channels through the action of G proteins. Primary transducing effect is Pi turnover.</text>
</comment>
<comment type="subunit">
    <text evidence="1">Interacts with GPRASP2 (By similarity). Interacts with TMEM147 (By similarity).</text>
</comment>
<comment type="subcellular location">
    <subcellularLocation>
        <location>Cell membrane</location>
        <topology>Multi-pass membrane protein</topology>
    </subcellularLocation>
    <subcellularLocation>
        <location>Postsynaptic cell membrane</location>
        <topology>Multi-pass membrane protein</topology>
    </subcellularLocation>
</comment>
<comment type="similarity">
    <text evidence="5">Belongs to the G-protein coupled receptor 1 family. Muscarinic acetylcholine receptor subfamily. CHRM1 sub-subfamily.</text>
</comment>
<feature type="chain" id="PRO_0000069018" description="Muscarinic acetylcholine receptor M1">
    <location>
        <begin position="1"/>
        <end position="460"/>
    </location>
</feature>
<feature type="topological domain" description="Extracellular" evidence="1">
    <location>
        <begin position="1"/>
        <end position="22"/>
    </location>
</feature>
<feature type="transmembrane region" description="Helical; Name=1" evidence="1">
    <location>
        <begin position="23"/>
        <end position="48"/>
    </location>
</feature>
<feature type="topological domain" description="Cytoplasmic" evidence="1">
    <location>
        <begin position="49"/>
        <end position="62"/>
    </location>
</feature>
<feature type="transmembrane region" description="Helical; Name=2" evidence="1">
    <location>
        <begin position="63"/>
        <end position="84"/>
    </location>
</feature>
<feature type="topological domain" description="Extracellular" evidence="1">
    <location>
        <begin position="85"/>
        <end position="95"/>
    </location>
</feature>
<feature type="transmembrane region" description="Helical; Name=3" evidence="1">
    <location>
        <begin position="96"/>
        <end position="121"/>
    </location>
</feature>
<feature type="topological domain" description="Cytoplasmic" evidence="1">
    <location>
        <begin position="122"/>
        <end position="142"/>
    </location>
</feature>
<feature type="transmembrane region" description="Helical; Name=4" evidence="1">
    <location>
        <begin position="143"/>
        <end position="164"/>
    </location>
</feature>
<feature type="topological domain" description="Extracellular" evidence="1">
    <location>
        <begin position="165"/>
        <end position="185"/>
    </location>
</feature>
<feature type="transmembrane region" description="Helical; Name=5" evidence="1">
    <location>
        <begin position="186"/>
        <end position="209"/>
    </location>
</feature>
<feature type="topological domain" description="Cytoplasmic" evidence="1">
    <location>
        <begin position="210"/>
        <end position="366"/>
    </location>
</feature>
<feature type="transmembrane region" description="Helical; Name=6" evidence="1">
    <location>
        <begin position="367"/>
        <end position="390"/>
    </location>
</feature>
<feature type="topological domain" description="Extracellular" evidence="1">
    <location>
        <begin position="391"/>
        <end position="397"/>
    </location>
</feature>
<feature type="transmembrane region" description="Helical; Name=7" evidence="1">
    <location>
        <begin position="398"/>
        <end position="420"/>
    </location>
</feature>
<feature type="topological domain" description="Cytoplasmic" evidence="1">
    <location>
        <begin position="421"/>
        <end position="460"/>
    </location>
</feature>
<feature type="region of interest" description="Disordered" evidence="6">
    <location>
        <begin position="225"/>
        <end position="256"/>
    </location>
</feature>
<feature type="region of interest" description="Disordered" evidence="6">
    <location>
        <begin position="274"/>
        <end position="296"/>
    </location>
</feature>
<feature type="region of interest" description="Disordered" evidence="6">
    <location>
        <begin position="310"/>
        <end position="351"/>
    </location>
</feature>
<feature type="compositionally biased region" description="Low complexity" evidence="6">
    <location>
        <begin position="238"/>
        <end position="247"/>
    </location>
</feature>
<feature type="compositionally biased region" description="Basic residues" evidence="6">
    <location>
        <begin position="328"/>
        <end position="343"/>
    </location>
</feature>
<feature type="modified residue" description="Phosphothreonine" evidence="2">
    <location>
        <position position="230"/>
    </location>
</feature>
<feature type="modified residue" description="Phosphothreonine" evidence="3">
    <location>
        <position position="428"/>
    </location>
</feature>
<feature type="modified residue" description="Phosphoserine" evidence="3">
    <location>
        <position position="451"/>
    </location>
</feature>
<feature type="modified residue" description="Phosphothreonine" evidence="3">
    <location>
        <position position="455"/>
    </location>
</feature>
<feature type="modified residue" description="Phosphoserine" evidence="3">
    <location>
        <position position="457"/>
    </location>
</feature>
<feature type="glycosylation site" description="N-linked (GlcNAc...) asparagine" evidence="4">
    <location>
        <position position="2"/>
    </location>
</feature>
<feature type="glycosylation site" description="N-linked (GlcNAc...) asparagine" evidence="4">
    <location>
        <position position="12"/>
    </location>
</feature>
<feature type="disulfide bond" evidence="5">
    <location>
        <begin position="98"/>
        <end position="178"/>
    </location>
</feature>